<feature type="chain" id="PRO_0000430731" description="Ent-sandaracopimaradiene 3-hydroxylase">
    <location>
        <begin position="1"/>
        <end position="510"/>
    </location>
</feature>
<feature type="transmembrane region" description="Helical" evidence="2">
    <location>
        <begin position="4"/>
        <end position="24"/>
    </location>
</feature>
<feature type="binding site" description="axial binding residue" evidence="1">
    <location>
        <position position="454"/>
    </location>
    <ligand>
        <name>heme</name>
        <dbReference type="ChEBI" id="CHEBI:30413"/>
    </ligand>
    <ligandPart>
        <name>Fe</name>
        <dbReference type="ChEBI" id="CHEBI:18248"/>
    </ligandPart>
</feature>
<feature type="sequence conflict" description="In Ref. 1; AAT46567." ref="1">
    <original>K</original>
    <variation>E</variation>
    <location>
        <position position="123"/>
    </location>
</feature>
<feature type="sequence conflict" description="In Ref. 1; AAT46567." ref="1">
    <original>S</original>
    <variation>P</variation>
    <location>
        <position position="218"/>
    </location>
</feature>
<protein>
    <recommendedName>
        <fullName evidence="12">Ent-sandaracopimaradiene 3-hydroxylase</fullName>
        <ecNumber evidence="6 7">1.14.14.70</ecNumber>
    </recommendedName>
    <alternativeName>
        <fullName evidence="12">Cytochrome P450 701A8</fullName>
    </alternativeName>
    <alternativeName>
        <fullName evidence="9">Ent-kaurene oxidase 4</fullName>
        <shortName evidence="9">OsKO4</shortName>
    </alternativeName>
    <alternativeName>
        <fullName evidence="10">Ent-kaurene oxidase-like 4</fullName>
        <shortName evidence="10">OsKOL4</shortName>
    </alternativeName>
    <alternativeName>
        <fullName evidence="11">OsKOS1</fullName>
    </alternativeName>
    <alternativeName>
        <fullName evidence="13">Syn-pimaradiene 3-monooxygenase</fullName>
        <ecNumber evidence="8">1.14.14.68</ecNumber>
    </alternativeName>
</protein>
<name>C7018_ORYSJ</name>
<reference key="1">
    <citation type="journal article" date="2005" name="Plant Physiol.">
        <title>The rice dwarf virus P2 protein interacts with ent-kaurene oxidases in vivo, leading to reduced biosynthesis of gibberellins and rice dwarf symptoms.</title>
        <authorList>
            <person name="Zhu S."/>
            <person name="Gao F."/>
            <person name="Cao X."/>
            <person name="Chen M."/>
            <person name="Ye G."/>
            <person name="Wei C."/>
            <person name="Li Y."/>
        </authorList>
    </citation>
    <scope>NUCLEOTIDE SEQUENCE [MRNA]</scope>
    <scope>INTERACTION WITH RICE DWARF VIRUS (RDV) P2 PROTEIN</scope>
    <source>
        <strain>cv. Xiushui 11</strain>
    </source>
</reference>
<reference key="2">
    <citation type="journal article" date="2005" name="Nature">
        <title>The map-based sequence of the rice genome.</title>
        <authorList>
            <consortium name="International rice genome sequencing project (IRGSP)"/>
        </authorList>
    </citation>
    <scope>NUCLEOTIDE SEQUENCE [LARGE SCALE GENOMIC DNA]</scope>
    <source>
        <strain>cv. Nipponbare</strain>
    </source>
</reference>
<reference key="3">
    <citation type="journal article" date="2008" name="Nucleic Acids Res.">
        <title>The rice annotation project database (RAP-DB): 2008 update.</title>
        <authorList>
            <consortium name="The rice annotation project (RAP)"/>
        </authorList>
    </citation>
    <scope>GENOME REANNOTATION</scope>
    <source>
        <strain>cv. Nipponbare</strain>
    </source>
</reference>
<reference key="4">
    <citation type="journal article" date="2013" name="Rice">
        <title>Improvement of the Oryza sativa Nipponbare reference genome using next generation sequence and optical map data.</title>
        <authorList>
            <person name="Kawahara Y."/>
            <person name="de la Bastide M."/>
            <person name="Hamilton J.P."/>
            <person name="Kanamori H."/>
            <person name="McCombie W.R."/>
            <person name="Ouyang S."/>
            <person name="Schwartz D.C."/>
            <person name="Tanaka T."/>
            <person name="Wu J."/>
            <person name="Zhou S."/>
            <person name="Childs K.L."/>
            <person name="Davidson R.M."/>
            <person name="Lin H."/>
            <person name="Quesada-Ocampo L."/>
            <person name="Vaillancourt B."/>
            <person name="Sakai H."/>
            <person name="Lee S.S."/>
            <person name="Kim J."/>
            <person name="Numa H."/>
            <person name="Itoh T."/>
            <person name="Buell C.R."/>
            <person name="Matsumoto T."/>
        </authorList>
    </citation>
    <scope>GENOME REANNOTATION</scope>
    <source>
        <strain>cv. Nipponbare</strain>
    </source>
</reference>
<reference key="5">
    <citation type="journal article" date="2004" name="Plant Mol. Biol.">
        <title>A rice semi-dwarf gene, Tan-Ginbozu (D35), encodes the gibberellin biosynthesis enzyme, ent-kaurene oxidase.</title>
        <authorList>
            <person name="Itoh H."/>
            <person name="Tatsumi T."/>
            <person name="Sakamoto T."/>
            <person name="Otomo K."/>
            <person name="Toyomasu T."/>
            <person name="Kitano H."/>
            <person name="Ashikari M."/>
            <person name="Ichihara S."/>
            <person name="Matsuoka M."/>
        </authorList>
    </citation>
    <scope>TISSUE SPECIFICITY</scope>
    <scope>INDUCTION BY ELICITOR</scope>
</reference>
<reference key="6">
    <citation type="journal article" date="2004" name="Plant Physiol.">
        <title>An overview of gibberellin metabolism enzyme genes and their related mutants in rice.</title>
        <authorList>
            <person name="Sakamoto T."/>
            <person name="Miura K."/>
            <person name="Itoh H."/>
            <person name="Tatsumi T."/>
            <person name="Ueguchi-Tanaka M."/>
            <person name="Ishiyama K."/>
            <person name="Kobayashi M."/>
            <person name="Agrawal G.K."/>
            <person name="Takeda S."/>
            <person name="Abe K."/>
            <person name="Miyao A."/>
            <person name="Hirochika H."/>
            <person name="Kitano H."/>
            <person name="Ashikari M."/>
            <person name="Matsuoka M."/>
        </authorList>
    </citation>
    <scope>GENE FAMILY</scope>
</reference>
<reference key="7">
    <citation type="journal article" date="2012" name="Plant Physiol.">
        <title>CYP701A8: a rice ent-kaurene oxidase paralog diverted to more specialized diterpenoid metabolism.</title>
        <authorList>
            <person name="Wang Q."/>
            <person name="Hillwig M.L."/>
            <person name="Wu Y."/>
            <person name="Peters R.J."/>
        </authorList>
    </citation>
    <scope>FUNCTION</scope>
    <scope>CATALYTIC ACTIVITY</scope>
    <scope>BIOPHYSICOCHEMICAL PROPERTIES</scope>
    <scope>INDUCTION BY JASMONATE</scope>
</reference>
<reference key="8">
    <citation type="journal article" date="2013" name="Biochem. J.">
        <title>Picking sides: distinct roles for CYP76M6 and CYP76M8 in rice oryzalexin biosynthesis.</title>
        <authorList>
            <person name="Wu Y."/>
            <person name="Wang Q."/>
            <person name="Hillwig M.L."/>
            <person name="Peters R.J."/>
        </authorList>
    </citation>
    <scope>FUNCTION</scope>
    <scope>CATALYTIC ACTIVITY</scope>
</reference>
<reference key="9">
    <citation type="journal article" date="2015" name="Appl. Microbiol. Biotechnol.">
        <title>Optimization of recombinant expression enables discovery of novel cytochrome P450 activity in rice diterpenoid biosynthesis.</title>
        <authorList>
            <person name="Kitaoka N."/>
            <person name="Wu Y."/>
            <person name="Xu M."/>
            <person name="Peters R.J."/>
        </authorList>
    </citation>
    <scope>FUNCTION</scope>
    <scope>CATALYTIC ACTIVITY</scope>
    <scope>BIOPHYSICOCHEMICAL PROPERTIES</scope>
</reference>
<evidence type="ECO:0000250" key="1">
    <source>
        <dbReference type="UniProtKB" id="P04798"/>
    </source>
</evidence>
<evidence type="ECO:0000255" key="2"/>
<evidence type="ECO:0000255" key="3">
    <source>
        <dbReference type="RuleBase" id="RU000461"/>
    </source>
</evidence>
<evidence type="ECO:0000269" key="4">
    <source>
    </source>
</evidence>
<evidence type="ECO:0000269" key="5">
    <source>
    </source>
</evidence>
<evidence type="ECO:0000269" key="6">
    <source>
    </source>
</evidence>
<evidence type="ECO:0000269" key="7">
    <source>
    </source>
</evidence>
<evidence type="ECO:0000269" key="8">
    <source>
    </source>
</evidence>
<evidence type="ECO:0000303" key="9">
    <source>
    </source>
</evidence>
<evidence type="ECO:0000303" key="10">
    <source>
    </source>
</evidence>
<evidence type="ECO:0000303" key="11">
    <source>
    </source>
</evidence>
<evidence type="ECO:0000303" key="12">
    <source>
    </source>
</evidence>
<evidence type="ECO:0000303" key="13">
    <source>
    </source>
</evidence>
<evidence type="ECO:0000305" key="14"/>
<evidence type="ECO:0000312" key="15">
    <source>
        <dbReference type="EMBL" id="AAT46567.1"/>
    </source>
</evidence>
<evidence type="ECO:0000312" key="16">
    <source>
        <dbReference type="EMBL" id="BAD54592.1"/>
    </source>
</evidence>
<evidence type="ECO:0000312" key="17">
    <source>
        <dbReference type="EMBL" id="BAF19819.1"/>
    </source>
</evidence>
<organism evidence="17">
    <name type="scientific">Oryza sativa subsp. japonica</name>
    <name type="common">Rice</name>
    <dbReference type="NCBI Taxonomy" id="39947"/>
    <lineage>
        <taxon>Eukaryota</taxon>
        <taxon>Viridiplantae</taxon>
        <taxon>Streptophyta</taxon>
        <taxon>Embryophyta</taxon>
        <taxon>Tracheophyta</taxon>
        <taxon>Spermatophyta</taxon>
        <taxon>Magnoliopsida</taxon>
        <taxon>Liliopsida</taxon>
        <taxon>Poales</taxon>
        <taxon>Poaceae</taxon>
        <taxon>BOP clade</taxon>
        <taxon>Oryzoideae</taxon>
        <taxon>Oryzeae</taxon>
        <taxon>Oryzinae</taxon>
        <taxon>Oryza</taxon>
        <taxon>Oryza sativa</taxon>
    </lineage>
</organism>
<keyword id="KW-0349">Heme</keyword>
<keyword id="KW-0945">Host-virus interaction</keyword>
<keyword id="KW-0408">Iron</keyword>
<keyword id="KW-0472">Membrane</keyword>
<keyword id="KW-0479">Metal-binding</keyword>
<keyword id="KW-0503">Monooxygenase</keyword>
<keyword id="KW-0521">NADP</keyword>
<keyword id="KW-0560">Oxidoreductase</keyword>
<keyword id="KW-1185">Reference proteome</keyword>
<keyword id="KW-0812">Transmembrane</keyword>
<keyword id="KW-1133">Transmembrane helix</keyword>
<sequence>MESMLVAGAGAAAVAAVGGLVAAAALADKLVAAPPPRKNRANPPPAVPGLPIIGNLHQLKEKKPHQTFAKWSETYGPIYTIKTGASPVVVLNSTEVAKEAMIDKFSSISTRKLPKAMSVLTRKSMVAISDYGDYQKMAKRNIMIGMLGFNAQKQFRGTRERMISNVLSTLHKLVSLDPHSPLNFRDVYINELFSLSLIQSLGEDVSSVYVEEFGREISKDEIFDVLVHEMMMCAVEADWRDYFPYLSWLPNKSFDTIVSTTEFRRDAIMNALIKKQKERIARGEARASYIDFLLEAERSAQLTDDQLMLLLSESILAAADTVLVTTEWTMYEIAKNPDKQELLYQEIREACGGEAVTEDDLPRLPYLNAVFHETLRLHSPVPVLPPRFVHDDTTLAGYDIAAGTQMMINVYACHMDEKVWESPGEWSPERFLGEGFEVADRYKTMAFGAGRRTCAGSLQAMNIACVAVARLVQELEWRLREGDGDKEDTMQFTALKLDPLHVHLKPRGRM</sequence>
<dbReference type="EC" id="1.14.14.70" evidence="6 7"/>
<dbReference type="EC" id="1.14.14.68" evidence="8"/>
<dbReference type="EMBL" id="AY579214">
    <property type="protein sequence ID" value="AAT46567.1"/>
    <property type="molecule type" value="mRNA"/>
</dbReference>
<dbReference type="EMBL" id="AP005471">
    <property type="protein sequence ID" value="BAD54592.1"/>
    <property type="status" value="ALT_SEQ"/>
    <property type="molecule type" value="Genomic_DNA"/>
</dbReference>
<dbReference type="EMBL" id="AP008212">
    <property type="protein sequence ID" value="BAF19819.1"/>
    <property type="molecule type" value="Genomic_DNA"/>
</dbReference>
<dbReference type="EMBL" id="AP014962">
    <property type="protein sequence ID" value="BAS98305.1"/>
    <property type="molecule type" value="Genomic_DNA"/>
</dbReference>
<dbReference type="RefSeq" id="XP_015640905.1">
    <property type="nucleotide sequence ID" value="XM_015785419.1"/>
</dbReference>
<dbReference type="SMR" id="Q0DBF4"/>
<dbReference type="FunCoup" id="Q0DBF4">
    <property type="interactions" value="257"/>
</dbReference>
<dbReference type="STRING" id="39947.Q0DBF4"/>
<dbReference type="PaxDb" id="39947-Q0DBF4"/>
<dbReference type="EnsemblPlants" id="Os06t0569500-01">
    <property type="protein sequence ID" value="Os06t0569500-01"/>
    <property type="gene ID" value="Os06g0569500"/>
</dbReference>
<dbReference type="Gramene" id="Os06t0569500-01">
    <property type="protein sequence ID" value="Os06t0569500-01"/>
    <property type="gene ID" value="Os06g0569500"/>
</dbReference>
<dbReference type="KEGG" id="dosa:Os06g0569500"/>
<dbReference type="eggNOG" id="KOG0156">
    <property type="taxonomic scope" value="Eukaryota"/>
</dbReference>
<dbReference type="HOGENOM" id="CLU_001570_4_0_1"/>
<dbReference type="InParanoid" id="Q0DBF4"/>
<dbReference type="OMA" id="TQEEHSG"/>
<dbReference type="OrthoDB" id="2789670at2759"/>
<dbReference type="BRENDA" id="1.14.14.68">
    <property type="organism ID" value="4460"/>
</dbReference>
<dbReference type="BRENDA" id="1.14.14.86">
    <property type="organism ID" value="8948"/>
</dbReference>
<dbReference type="PlantReactome" id="R-OSA-1119557">
    <property type="pathway name" value="GA12 biosynthesis"/>
</dbReference>
<dbReference type="SABIO-RK" id="Q0DBF4"/>
<dbReference type="Proteomes" id="UP000000763">
    <property type="component" value="Chromosome 6"/>
</dbReference>
<dbReference type="Proteomes" id="UP000059680">
    <property type="component" value="Chromosome 6"/>
</dbReference>
<dbReference type="GO" id="GO:0009707">
    <property type="term" value="C:chloroplast outer membrane"/>
    <property type="evidence" value="ECO:0000318"/>
    <property type="project" value="GO_Central"/>
</dbReference>
<dbReference type="GO" id="GO:0102596">
    <property type="term" value="F:cytochrome P450 dependent ent-sandaracopimaradiene 3-hydroxylase activity"/>
    <property type="evidence" value="ECO:0007669"/>
    <property type="project" value="UniProtKB-EC"/>
</dbReference>
<dbReference type="GO" id="GO:0052615">
    <property type="term" value="F:ent-kaurene oxidase activity"/>
    <property type="evidence" value="ECO:0007669"/>
    <property type="project" value="InterPro"/>
</dbReference>
<dbReference type="GO" id="GO:0020037">
    <property type="term" value="F:heme binding"/>
    <property type="evidence" value="ECO:0007669"/>
    <property type="project" value="InterPro"/>
</dbReference>
<dbReference type="GO" id="GO:0005506">
    <property type="term" value="F:iron ion binding"/>
    <property type="evidence" value="ECO:0007669"/>
    <property type="project" value="InterPro"/>
</dbReference>
<dbReference type="GO" id="GO:0016709">
    <property type="term" value="F:oxidoreductase activity, acting on paired donors, with incorporation or reduction of molecular oxygen, NAD(P)H as one donor, and incorporation of one atom of oxygen"/>
    <property type="evidence" value="ECO:0000314"/>
    <property type="project" value="UniProtKB"/>
</dbReference>
<dbReference type="GO" id="GO:0051502">
    <property type="term" value="P:diterpene phytoalexin biosynthetic process"/>
    <property type="evidence" value="ECO:0000314"/>
    <property type="project" value="UniProtKB"/>
</dbReference>
<dbReference type="GO" id="GO:0010241">
    <property type="term" value="P:ent-kaurene oxidation to kaurenoic acid"/>
    <property type="evidence" value="ECO:0000318"/>
    <property type="project" value="GO_Central"/>
</dbReference>
<dbReference type="GO" id="GO:0009686">
    <property type="term" value="P:gibberellin biosynthetic process"/>
    <property type="evidence" value="ECO:0000318"/>
    <property type="project" value="GO_Central"/>
</dbReference>
<dbReference type="CDD" id="cd11075">
    <property type="entry name" value="CYP77_89"/>
    <property type="match status" value="1"/>
</dbReference>
<dbReference type="FunFam" id="1.10.630.10:FF:000062">
    <property type="entry name" value="Ent-kaurene oxidase 2"/>
    <property type="match status" value="1"/>
</dbReference>
<dbReference type="Gene3D" id="1.10.630.10">
    <property type="entry name" value="Cytochrome P450"/>
    <property type="match status" value="1"/>
</dbReference>
<dbReference type="InterPro" id="IPR001128">
    <property type="entry name" value="Cyt_P450"/>
</dbReference>
<dbReference type="InterPro" id="IPR017972">
    <property type="entry name" value="Cyt_P450_CS"/>
</dbReference>
<dbReference type="InterPro" id="IPR002401">
    <property type="entry name" value="Cyt_P450_E_grp-I"/>
</dbReference>
<dbReference type="InterPro" id="IPR036396">
    <property type="entry name" value="Cyt_P450_sf"/>
</dbReference>
<dbReference type="InterPro" id="IPR044225">
    <property type="entry name" value="KO_chloroplastic"/>
</dbReference>
<dbReference type="PANTHER" id="PTHR47283">
    <property type="entry name" value="ENT-KAURENE OXIDASE, CHLOROPLASTIC"/>
    <property type="match status" value="1"/>
</dbReference>
<dbReference type="PANTHER" id="PTHR47283:SF1">
    <property type="entry name" value="ENT-KAURENE OXIDASE, CHLOROPLASTIC"/>
    <property type="match status" value="1"/>
</dbReference>
<dbReference type="Pfam" id="PF00067">
    <property type="entry name" value="p450"/>
    <property type="match status" value="1"/>
</dbReference>
<dbReference type="PRINTS" id="PR00463">
    <property type="entry name" value="EP450I"/>
</dbReference>
<dbReference type="PRINTS" id="PR00385">
    <property type="entry name" value="P450"/>
</dbReference>
<dbReference type="SUPFAM" id="SSF48264">
    <property type="entry name" value="Cytochrome P450"/>
    <property type="match status" value="1"/>
</dbReference>
<dbReference type="PROSITE" id="PS00086">
    <property type="entry name" value="CYTOCHROME_P450"/>
    <property type="match status" value="1"/>
</dbReference>
<gene>
    <name evidence="12" type="primary">CYP701A8</name>
    <name evidence="15" type="synonym">KO1</name>
    <name evidence="17" type="ordered locus">Os06g0569500</name>
    <name evidence="14" type="ordered locus">LOC_Os06g37300</name>
    <name evidence="16" type="ORF">OSJNBa0062E01.27</name>
</gene>
<proteinExistence type="evidence at protein level"/>
<comment type="function">
    <text evidence="6 7 8">Catalyzes the hydroxylation of ent-sandaracopimaradiene at the C3alpha position to produce ent-3beta-hydroxy-sandaracopimaradiene, an intermediates for the biosynthesis of oryzalexin D and oryzalexin E phytoalexins (PubMed:22247270, PubMed:23795884). Catalyzes the hydroxylation of ent-cassadiene at the C3alpha position to produce 3alpha-hydroxy-ent-cassadiene, which may be an intermediate for the biosynthesis of phytocassane phytoalexins (PubMed:22247270). Catalyzes the hydroxylation of syn-pimaradiene (9-beta-pimara-7,15-diene) at the C3beta position to produce 3-beta-syn-pimaradiene (PubMed:25758958). Can hydroxylate ent-kaurene in vitro, but the product is not ent-kauren-19-ol as expected for ent-kaurene oxidase activity (PubMed:22247270).</text>
</comment>
<comment type="catalytic activity">
    <reaction evidence="6 7">
        <text>ent-sandaracopimara-8(14),15-diene + reduced [NADPH--hemoprotein reductase] + O2 = ent-sandaracopimaradien-3beta-ol + oxidized [NADPH--hemoprotein reductase] + H2O + H(+)</text>
        <dbReference type="Rhea" id="RHEA:41464"/>
        <dbReference type="Rhea" id="RHEA-COMP:11964"/>
        <dbReference type="Rhea" id="RHEA-COMP:11965"/>
        <dbReference type="ChEBI" id="CHEBI:15377"/>
        <dbReference type="ChEBI" id="CHEBI:15378"/>
        <dbReference type="ChEBI" id="CHEBI:15379"/>
        <dbReference type="ChEBI" id="CHEBI:50061"/>
        <dbReference type="ChEBI" id="CHEBI:57618"/>
        <dbReference type="ChEBI" id="CHEBI:58210"/>
        <dbReference type="ChEBI" id="CHEBI:78255"/>
        <dbReference type="EC" id="1.14.14.70"/>
    </reaction>
</comment>
<comment type="catalytic activity">
    <reaction evidence="8">
        <text>9beta-pimara-7,15-diene + reduced [NADPH--hemoprotein reductase] + O2 = 9beta-pimara-7,15-diene-3beta-ol + oxidized [NADPH--hemoprotein reductase] + H2O + H(+)</text>
        <dbReference type="Rhea" id="RHEA:55472"/>
        <dbReference type="Rhea" id="RHEA-COMP:11964"/>
        <dbReference type="Rhea" id="RHEA-COMP:11965"/>
        <dbReference type="ChEBI" id="CHEBI:15377"/>
        <dbReference type="ChEBI" id="CHEBI:15378"/>
        <dbReference type="ChEBI" id="CHEBI:15379"/>
        <dbReference type="ChEBI" id="CHEBI:50067"/>
        <dbReference type="ChEBI" id="CHEBI:57618"/>
        <dbReference type="ChEBI" id="CHEBI:58210"/>
        <dbReference type="ChEBI" id="CHEBI:138966"/>
        <dbReference type="EC" id="1.14.14.68"/>
    </reaction>
</comment>
<comment type="cofactor">
    <cofactor evidence="1">
        <name>heme</name>
        <dbReference type="ChEBI" id="CHEBI:30413"/>
    </cofactor>
</comment>
<comment type="biophysicochemical properties">
    <kinetics>
        <KM evidence="6">2 uM for ent-cassadiene</KM>
        <KM evidence="6">2.3 uM for ent-sandaracopimaradiene</KM>
        <KM evidence="6">7 uM for ent-kaurene</KM>
        <KM evidence="8">27 uM for syn-pimaradiene</KM>
        <text evidence="8">kcat is 1.4 sec(-1) with syn-pimaradiene as substrate.</text>
    </kinetics>
</comment>
<comment type="subunit">
    <text evidence="5">Interacts with the rice dwarf virus (RDV) P2 protein.</text>
</comment>
<comment type="subcellular location">
    <subcellularLocation>
        <location evidence="2">Membrane</location>
        <topology evidence="2">Single-pass membrane protein</topology>
    </subcellularLocation>
</comment>
<comment type="tissue specificity">
    <text evidence="4">Expressed in leaf blades and sheaths, stems and panicles.</text>
</comment>
<comment type="induction">
    <text evidence="4 6">By N-acetylchitooligosaccharide elicitor (PubMed:15316288) and methyl jasmonate (PubMed:22247270).</text>
</comment>
<comment type="similarity">
    <text evidence="3">Belongs to the cytochrome P450 family.</text>
</comment>
<comment type="sequence caution">
    <conflict type="erroneous gene model prediction">
        <sequence resource="EMBL-CDS" id="BAD54592"/>
    </conflict>
</comment>
<accession>Q0DBF4</accession>
<accession>A0A0N7KMA9</accession>
<accession>Q5Z5S0</accession>
<accession>Q6GZ42</accession>